<protein>
    <recommendedName>
        <fullName>Cytochrome c oxidase subunit 6A2, mitochondrial</fullName>
    </recommendedName>
    <alternativeName>
        <fullName>Cytochrome c oxidase polypeptide VIa-heart</fullName>
        <shortName>COXVIAH</shortName>
    </alternativeName>
</protein>
<keyword id="KW-0002">3D-structure</keyword>
<keyword id="KW-0472">Membrane</keyword>
<keyword id="KW-0496">Mitochondrion</keyword>
<keyword id="KW-0999">Mitochondrion inner membrane</keyword>
<keyword id="KW-0560">Oxidoreductase</keyword>
<keyword id="KW-1185">Reference proteome</keyword>
<keyword id="KW-0809">Transit peptide</keyword>
<keyword id="KW-0812">Transmembrane</keyword>
<keyword id="KW-1133">Transmembrane helix</keyword>
<proteinExistence type="evidence at protein level"/>
<sequence>MALPLKVLSRSMASAAKGDHGGAGANTWRLLTFVLALPGVALCSLNCWMHAGHHERPEFIPYHHLRIRTKPFAWGDGNHTLFHNPHVNPLPTGYEHP</sequence>
<dbReference type="EMBL" id="U08439">
    <property type="protein sequence ID" value="AAA17835.1"/>
    <property type="molecule type" value="mRNA"/>
</dbReference>
<dbReference type="EMBL" id="U34801">
    <property type="protein sequence ID" value="AAC52280.1"/>
    <property type="molecule type" value="Genomic_DNA"/>
</dbReference>
<dbReference type="EMBL" id="U63716">
    <property type="protein sequence ID" value="AAB41683.1"/>
    <property type="molecule type" value="Genomic_DNA"/>
</dbReference>
<dbReference type="EMBL" id="AK002506">
    <property type="protein sequence ID" value="BAB22151.1"/>
    <property type="molecule type" value="mRNA"/>
</dbReference>
<dbReference type="CCDS" id="CCDS21891.1"/>
<dbReference type="PIR" id="I49360">
    <property type="entry name" value="I49360"/>
</dbReference>
<dbReference type="RefSeq" id="NP_034073.2">
    <property type="nucleotide sequence ID" value="NM_009943.2"/>
</dbReference>
<dbReference type="PDB" id="7O37">
    <property type="method" value="EM"/>
    <property type="resolution" value="3.20 A"/>
    <property type="chains" value="g=13-97"/>
</dbReference>
<dbReference type="PDB" id="7O3C">
    <property type="method" value="EM"/>
    <property type="resolution" value="3.30 A"/>
    <property type="chains" value="g=13-97"/>
</dbReference>
<dbReference type="PDB" id="7O3E">
    <property type="method" value="EM"/>
    <property type="resolution" value="3.60 A"/>
    <property type="chains" value="g=13-97"/>
</dbReference>
<dbReference type="PDB" id="8PW5">
    <property type="method" value="EM"/>
    <property type="resolution" value="3.60 A"/>
    <property type="chains" value="g/t=1-97"/>
</dbReference>
<dbReference type="PDB" id="8PW6">
    <property type="method" value="EM"/>
    <property type="resolution" value="3.30 A"/>
    <property type="chains" value="t=1-97"/>
</dbReference>
<dbReference type="PDB" id="8PW7">
    <property type="method" value="EM"/>
    <property type="resolution" value="3.50 A"/>
    <property type="chains" value="t=1-97"/>
</dbReference>
<dbReference type="PDBsum" id="7O37"/>
<dbReference type="PDBsum" id="7O3C"/>
<dbReference type="PDBsum" id="7O3E"/>
<dbReference type="PDBsum" id="8PW5"/>
<dbReference type="PDBsum" id="8PW6"/>
<dbReference type="PDBsum" id="8PW7"/>
<dbReference type="EMDB" id="EMD-12702"/>
<dbReference type="EMDB" id="EMD-12703"/>
<dbReference type="EMDB" id="EMD-12705"/>
<dbReference type="SMR" id="P43023"/>
<dbReference type="FunCoup" id="P43023">
    <property type="interactions" value="500"/>
</dbReference>
<dbReference type="IntAct" id="P43023">
    <property type="interactions" value="1"/>
</dbReference>
<dbReference type="STRING" id="10090.ENSMUSP00000033049"/>
<dbReference type="iPTMnet" id="P43023"/>
<dbReference type="PhosphoSitePlus" id="P43023"/>
<dbReference type="jPOST" id="P43023"/>
<dbReference type="PaxDb" id="10090-ENSMUSP00000033049"/>
<dbReference type="PeptideAtlas" id="P43023"/>
<dbReference type="ProteomicsDB" id="279213"/>
<dbReference type="Antibodypedia" id="27872">
    <property type="antibodies" value="104 antibodies from 30 providers"/>
</dbReference>
<dbReference type="DNASU" id="12862"/>
<dbReference type="Ensembl" id="ENSMUST00000033049.9">
    <property type="protein sequence ID" value="ENSMUSP00000033049.8"/>
    <property type="gene ID" value="ENSMUSG00000030785.9"/>
</dbReference>
<dbReference type="GeneID" id="12862"/>
<dbReference type="KEGG" id="mmu:12862"/>
<dbReference type="UCSC" id="uc009jyi.1">
    <property type="organism name" value="mouse"/>
</dbReference>
<dbReference type="AGR" id="MGI:104649"/>
<dbReference type="CTD" id="1339"/>
<dbReference type="MGI" id="MGI:104649">
    <property type="gene designation" value="Cox6a2"/>
</dbReference>
<dbReference type="VEuPathDB" id="HostDB:ENSMUSG00000030785"/>
<dbReference type="eggNOG" id="KOG3469">
    <property type="taxonomic scope" value="Eukaryota"/>
</dbReference>
<dbReference type="GeneTree" id="ENSGT00940000162257"/>
<dbReference type="HOGENOM" id="CLU_122515_1_1_1"/>
<dbReference type="InParanoid" id="P43023"/>
<dbReference type="OMA" id="EPFAKYE"/>
<dbReference type="OrthoDB" id="5947505at2759"/>
<dbReference type="PhylomeDB" id="P43023"/>
<dbReference type="TreeFam" id="TF105064"/>
<dbReference type="Reactome" id="R-MMU-5628897">
    <property type="pathway name" value="TP53 Regulates Metabolic Genes"/>
</dbReference>
<dbReference type="Reactome" id="R-MMU-611105">
    <property type="pathway name" value="Respiratory electron transport"/>
</dbReference>
<dbReference type="Reactome" id="R-MMU-9707564">
    <property type="pathway name" value="Cytoprotection by HMOX1"/>
</dbReference>
<dbReference type="Reactome" id="R-MMU-9864848">
    <property type="pathway name" value="Complex IV assembly"/>
</dbReference>
<dbReference type="UniPathway" id="UPA00705"/>
<dbReference type="BioGRID-ORCS" id="12862">
    <property type="hits" value="2 hits in 79 CRISPR screens"/>
</dbReference>
<dbReference type="ChiTaRS" id="Cox6a2">
    <property type="organism name" value="mouse"/>
</dbReference>
<dbReference type="PRO" id="PR:P43023"/>
<dbReference type="Proteomes" id="UP000000589">
    <property type="component" value="Chromosome 7"/>
</dbReference>
<dbReference type="RNAct" id="P43023">
    <property type="molecule type" value="protein"/>
</dbReference>
<dbReference type="Bgee" id="ENSMUSG00000030785">
    <property type="expression patterns" value="Expressed in digastric muscle group and 139 other cell types or tissues"/>
</dbReference>
<dbReference type="GO" id="GO:0005743">
    <property type="term" value="C:mitochondrial inner membrane"/>
    <property type="evidence" value="ECO:0000314"/>
    <property type="project" value="UniProtKB"/>
</dbReference>
<dbReference type="GO" id="GO:0005739">
    <property type="term" value="C:mitochondrion"/>
    <property type="evidence" value="ECO:0007005"/>
    <property type="project" value="MGI"/>
</dbReference>
<dbReference type="GO" id="GO:0045277">
    <property type="term" value="C:respiratory chain complex IV"/>
    <property type="evidence" value="ECO:0000314"/>
    <property type="project" value="UniProtKB"/>
</dbReference>
<dbReference type="GO" id="GO:0016491">
    <property type="term" value="F:oxidoreductase activity"/>
    <property type="evidence" value="ECO:0007669"/>
    <property type="project" value="UniProtKB-KW"/>
</dbReference>
<dbReference type="GO" id="GO:0006119">
    <property type="term" value="P:oxidative phosphorylation"/>
    <property type="evidence" value="ECO:0007669"/>
    <property type="project" value="UniProtKB-UniPathway"/>
</dbReference>
<dbReference type="CDD" id="cd00925">
    <property type="entry name" value="Cyt_c_Oxidase_VIa"/>
    <property type="match status" value="1"/>
</dbReference>
<dbReference type="FunFam" id="4.10.95.10:FF:000001">
    <property type="entry name" value="Cytochrome c oxidase subunit 6A, mitochondrial"/>
    <property type="match status" value="1"/>
</dbReference>
<dbReference type="Gene3D" id="4.10.95.10">
    <property type="entry name" value="Cytochrome c oxidase, subunit VIa"/>
    <property type="match status" value="1"/>
</dbReference>
<dbReference type="InterPro" id="IPR001349">
    <property type="entry name" value="Cyt_c_oxidase_su6a"/>
</dbReference>
<dbReference type="InterPro" id="IPR018507">
    <property type="entry name" value="Cyt_c_oxidase_su6a_CS"/>
</dbReference>
<dbReference type="InterPro" id="IPR036418">
    <property type="entry name" value="Cyt_c_oxidase_su6a_sf"/>
</dbReference>
<dbReference type="PANTHER" id="PTHR11504">
    <property type="entry name" value="CYTOCHROME C OXIDASE POLYPEPTIDE VIA"/>
    <property type="match status" value="1"/>
</dbReference>
<dbReference type="PANTHER" id="PTHR11504:SF1">
    <property type="entry name" value="CYTOCHROME C OXIDASE SUBUNIT 6A2, MITOCHONDRIAL"/>
    <property type="match status" value="1"/>
</dbReference>
<dbReference type="Pfam" id="PF02046">
    <property type="entry name" value="COX6A"/>
    <property type="match status" value="1"/>
</dbReference>
<dbReference type="PIRSF" id="PIRSF000277">
    <property type="entry name" value="COX6A1"/>
    <property type="match status" value="1"/>
</dbReference>
<dbReference type="SUPFAM" id="SSF81411">
    <property type="entry name" value="Mitochondrial cytochrome c oxidase subunit VIa"/>
    <property type="match status" value="1"/>
</dbReference>
<dbReference type="PROSITE" id="PS01329">
    <property type="entry name" value="COX6A"/>
    <property type="match status" value="1"/>
</dbReference>
<gene>
    <name type="primary">Cox6a2</name>
</gene>
<comment type="function">
    <text evidence="2 3 4">Component of the cytochrome c oxidase, the last enzyme in the mitochondrial electron transport chain which drives oxidative phosphorylation (PubMed:31155743, PubMed:34616041, PubMed:38575788). The respiratory chain contains 3 multisubunit complexes succinate dehydrogenase (complex II, CII), ubiquinol-cytochrome c oxidoreductase (cytochrome b-c1 complex, complex III, CIII) and cytochrome c oxidase (complex IV, CIV), that cooperate to transfer electrons derived from NADH and succinate to molecular oxygen, creating an electrochemical gradient over the inner membrane that drives transmembrane transport and the ATP synthase (PubMed:31155743, PubMed:34616041, PubMed:38575788). Cytochrome c oxidase is the component of the respiratory chain that catalyzes the reduction of oxygen to water. Electrons originating from reduced cytochrome c in the intermembrane space (IMS) are transferred via the dinuclear copper A center (CU(A)) of subunit 2 and heme A of subunit 1 to the active site in subunit 1, a binuclear center (BNC) formed by heme A3 and copper B (CU(B)). The BNC reduces molecular oxygen to 2 water molecules unsing 4 electrons from cytochrome c in the IMS and 4 protons from the mitochondrial matrix. Plays a role in the assembly and stabilization of complex IV (PubMed:31155743).</text>
</comment>
<comment type="pathway">
    <text evidence="3 4">Energy metabolism; oxidative phosphorylation.</text>
</comment>
<comment type="subunit">
    <text evidence="3 4">Component of the cytochrome c oxidase (complex IV, CIV), a multisubunit enzyme composed of 14 subunits (PubMed:34616041, PubMed:38575788). The complex is composed of a catalytic core of 3 subunits MT-CO1, MT-CO2 and MT-CO3, encoded in the mitochondrial DNA, and 11 supernumerary subunits COX4I, COX5A, COX5B, COX6A, COX6B, COX6C, COX7A, COX7B, COX7C, COX8 and NDUFA4, which are encoded in the nuclear genome (PubMed:34616041, PubMed:38575788). The complex exists as a monomer or a dimer and forms supercomplexes (SCs) in the inner mitochondrial membrane with NADH-ubiquinone oxidoreductase (complex I, CI) and ubiquinol-cytochrome c oxidoreductase (cytochrome b-c1 complex, complex III, CIII), resulting in different assemblies (supercomplex SCI(1)III(2)IV(1) and megacomplex MCI(2)III(2)IV(2)) (PubMed:34616041, PubMed:38575788).</text>
</comment>
<comment type="subcellular location">
    <subcellularLocation>
        <location evidence="3 4">Mitochondrion inner membrane</location>
        <topology evidence="3 4">Single-pass membrane protein</topology>
    </subcellularLocation>
</comment>
<comment type="disruption phenotype">
    <text evidence="2">Knockout mice show significant decline of COX activity and assembly in skeletal muscle. In particular, complexes IV, IV(2) and III(2)IV(2), and supercomplex I(1)III(2)IV(1) are reduced, whereas levels of complexes I, II, and III are normal.</text>
</comment>
<comment type="similarity">
    <text evidence="5">Belongs to the cytochrome c oxidase subunit 6A family.</text>
</comment>
<accession>P43023</accession>
<reference key="1">
    <citation type="submission" date="1994-04" db="EMBL/GenBank/DDBJ databases">
        <authorList>
            <person name="Newton D."/>
            <person name="Bowman L.H."/>
        </authorList>
    </citation>
    <scope>NUCLEOTIDE SEQUENCE</scope>
    <source>
        <strain>BALB/cJ</strain>
    </source>
</reference>
<reference key="2">
    <citation type="journal article" date="1995" name="J. Biol. Chem.">
        <title>Structural characterization and regulatory element analysis of the heart isoform of cytochrome c oxidase VIa.</title>
        <authorList>
            <person name="Wan B."/>
            <person name="Moreadith R.W."/>
        </authorList>
    </citation>
    <scope>NUCLEOTIDE SEQUENCE [GENOMIC DNA]</scope>
    <source>
        <strain>129/Sv</strain>
    </source>
</reference>
<reference key="3">
    <citation type="submission" date="1997-02" db="EMBL/GenBank/DDBJ databases">
        <authorList>
            <person name="Schmidt T.A."/>
            <person name="Jaradat S.A."/>
            <person name="Goodman M."/>
            <person name="Lomax M.I."/>
            <person name="Grossman L.I."/>
        </authorList>
    </citation>
    <scope>NUCLEOTIDE SEQUENCE</scope>
</reference>
<reference key="4">
    <citation type="journal article" date="2005" name="Science">
        <title>The transcriptional landscape of the mammalian genome.</title>
        <authorList>
            <person name="Carninci P."/>
            <person name="Kasukawa T."/>
            <person name="Katayama S."/>
            <person name="Gough J."/>
            <person name="Frith M.C."/>
            <person name="Maeda N."/>
            <person name="Oyama R."/>
            <person name="Ravasi T."/>
            <person name="Lenhard B."/>
            <person name="Wells C."/>
            <person name="Kodzius R."/>
            <person name="Shimokawa K."/>
            <person name="Bajic V.B."/>
            <person name="Brenner S.E."/>
            <person name="Batalov S."/>
            <person name="Forrest A.R."/>
            <person name="Zavolan M."/>
            <person name="Davis M.J."/>
            <person name="Wilming L.G."/>
            <person name="Aidinis V."/>
            <person name="Allen J.E."/>
            <person name="Ambesi-Impiombato A."/>
            <person name="Apweiler R."/>
            <person name="Aturaliya R.N."/>
            <person name="Bailey T.L."/>
            <person name="Bansal M."/>
            <person name="Baxter L."/>
            <person name="Beisel K.W."/>
            <person name="Bersano T."/>
            <person name="Bono H."/>
            <person name="Chalk A.M."/>
            <person name="Chiu K.P."/>
            <person name="Choudhary V."/>
            <person name="Christoffels A."/>
            <person name="Clutterbuck D.R."/>
            <person name="Crowe M.L."/>
            <person name="Dalla E."/>
            <person name="Dalrymple B.P."/>
            <person name="de Bono B."/>
            <person name="Della Gatta G."/>
            <person name="di Bernardo D."/>
            <person name="Down T."/>
            <person name="Engstrom P."/>
            <person name="Fagiolini M."/>
            <person name="Faulkner G."/>
            <person name="Fletcher C.F."/>
            <person name="Fukushima T."/>
            <person name="Furuno M."/>
            <person name="Futaki S."/>
            <person name="Gariboldi M."/>
            <person name="Georgii-Hemming P."/>
            <person name="Gingeras T.R."/>
            <person name="Gojobori T."/>
            <person name="Green R.E."/>
            <person name="Gustincich S."/>
            <person name="Harbers M."/>
            <person name="Hayashi Y."/>
            <person name="Hensch T.K."/>
            <person name="Hirokawa N."/>
            <person name="Hill D."/>
            <person name="Huminiecki L."/>
            <person name="Iacono M."/>
            <person name="Ikeo K."/>
            <person name="Iwama A."/>
            <person name="Ishikawa T."/>
            <person name="Jakt M."/>
            <person name="Kanapin A."/>
            <person name="Katoh M."/>
            <person name="Kawasawa Y."/>
            <person name="Kelso J."/>
            <person name="Kitamura H."/>
            <person name="Kitano H."/>
            <person name="Kollias G."/>
            <person name="Krishnan S.P."/>
            <person name="Kruger A."/>
            <person name="Kummerfeld S.K."/>
            <person name="Kurochkin I.V."/>
            <person name="Lareau L.F."/>
            <person name="Lazarevic D."/>
            <person name="Lipovich L."/>
            <person name="Liu J."/>
            <person name="Liuni S."/>
            <person name="McWilliam S."/>
            <person name="Madan Babu M."/>
            <person name="Madera M."/>
            <person name="Marchionni L."/>
            <person name="Matsuda H."/>
            <person name="Matsuzawa S."/>
            <person name="Miki H."/>
            <person name="Mignone F."/>
            <person name="Miyake S."/>
            <person name="Morris K."/>
            <person name="Mottagui-Tabar S."/>
            <person name="Mulder N."/>
            <person name="Nakano N."/>
            <person name="Nakauchi H."/>
            <person name="Ng P."/>
            <person name="Nilsson R."/>
            <person name="Nishiguchi S."/>
            <person name="Nishikawa S."/>
            <person name="Nori F."/>
            <person name="Ohara O."/>
            <person name="Okazaki Y."/>
            <person name="Orlando V."/>
            <person name="Pang K.C."/>
            <person name="Pavan W.J."/>
            <person name="Pavesi G."/>
            <person name="Pesole G."/>
            <person name="Petrovsky N."/>
            <person name="Piazza S."/>
            <person name="Reed J."/>
            <person name="Reid J.F."/>
            <person name="Ring B.Z."/>
            <person name="Ringwald M."/>
            <person name="Rost B."/>
            <person name="Ruan Y."/>
            <person name="Salzberg S.L."/>
            <person name="Sandelin A."/>
            <person name="Schneider C."/>
            <person name="Schoenbach C."/>
            <person name="Sekiguchi K."/>
            <person name="Semple C.A."/>
            <person name="Seno S."/>
            <person name="Sessa L."/>
            <person name="Sheng Y."/>
            <person name="Shibata Y."/>
            <person name="Shimada H."/>
            <person name="Shimada K."/>
            <person name="Silva D."/>
            <person name="Sinclair B."/>
            <person name="Sperling S."/>
            <person name="Stupka E."/>
            <person name="Sugiura K."/>
            <person name="Sultana R."/>
            <person name="Takenaka Y."/>
            <person name="Taki K."/>
            <person name="Tammoja K."/>
            <person name="Tan S.L."/>
            <person name="Tang S."/>
            <person name="Taylor M.S."/>
            <person name="Tegner J."/>
            <person name="Teichmann S.A."/>
            <person name="Ueda H.R."/>
            <person name="van Nimwegen E."/>
            <person name="Verardo R."/>
            <person name="Wei C.L."/>
            <person name="Yagi K."/>
            <person name="Yamanishi H."/>
            <person name="Zabarovsky E."/>
            <person name="Zhu S."/>
            <person name="Zimmer A."/>
            <person name="Hide W."/>
            <person name="Bult C."/>
            <person name="Grimmond S.M."/>
            <person name="Teasdale R.D."/>
            <person name="Liu E.T."/>
            <person name="Brusic V."/>
            <person name="Quackenbush J."/>
            <person name="Wahlestedt C."/>
            <person name="Mattick J.S."/>
            <person name="Hume D.A."/>
            <person name="Kai C."/>
            <person name="Sasaki D."/>
            <person name="Tomaru Y."/>
            <person name="Fukuda S."/>
            <person name="Kanamori-Katayama M."/>
            <person name="Suzuki M."/>
            <person name="Aoki J."/>
            <person name="Arakawa T."/>
            <person name="Iida J."/>
            <person name="Imamura K."/>
            <person name="Itoh M."/>
            <person name="Kato T."/>
            <person name="Kawaji H."/>
            <person name="Kawagashira N."/>
            <person name="Kawashima T."/>
            <person name="Kojima M."/>
            <person name="Kondo S."/>
            <person name="Konno H."/>
            <person name="Nakano K."/>
            <person name="Ninomiya N."/>
            <person name="Nishio T."/>
            <person name="Okada M."/>
            <person name="Plessy C."/>
            <person name="Shibata K."/>
            <person name="Shiraki T."/>
            <person name="Suzuki S."/>
            <person name="Tagami M."/>
            <person name="Waki K."/>
            <person name="Watahiki A."/>
            <person name="Okamura-Oho Y."/>
            <person name="Suzuki H."/>
            <person name="Kawai J."/>
            <person name="Hayashizaki Y."/>
        </authorList>
    </citation>
    <scope>NUCLEOTIDE SEQUENCE [LARGE SCALE MRNA]</scope>
    <source>
        <strain>C57BL/6J</strain>
        <tissue>Kidney</tissue>
    </source>
</reference>
<reference key="5">
    <citation type="journal article" date="2010" name="Cell">
        <title>A tissue-specific atlas of mouse protein phosphorylation and expression.</title>
        <authorList>
            <person name="Huttlin E.L."/>
            <person name="Jedrychowski M.P."/>
            <person name="Elias J.E."/>
            <person name="Goswami T."/>
            <person name="Rad R."/>
            <person name="Beausoleil S.A."/>
            <person name="Villen J."/>
            <person name="Haas W."/>
            <person name="Sowa M.E."/>
            <person name="Gygi S.P."/>
        </authorList>
    </citation>
    <scope>IDENTIFICATION BY MASS SPECTROMETRY [LARGE SCALE ANALYSIS]</scope>
    <source>
        <tissue>Heart</tissue>
    </source>
</reference>
<reference key="6">
    <citation type="journal article" date="2019" name="Ann. Neurol.">
        <title>COX6A2 variants cause a muscle-specific cytochrome c oxidase deficiency.</title>
        <authorList>
            <person name="Inoue M."/>
            <person name="Uchino S."/>
            <person name="Iida A."/>
            <person name="Noguchi S."/>
            <person name="Hayashi S."/>
            <person name="Takahashi T."/>
            <person name="Fujii K."/>
            <person name="Komaki H."/>
            <person name="Takeshita E."/>
            <person name="Nonaka I."/>
            <person name="Okada Y."/>
            <person name="Yoshizawa T."/>
            <person name="Van Lommel L."/>
            <person name="Schuit F."/>
            <person name="Goto Y.I."/>
            <person name="Mimaki M."/>
            <person name="Nishino I."/>
        </authorList>
    </citation>
    <scope>FUNCTION</scope>
    <scope>DISRUPTION PHENOTYPE</scope>
</reference>
<reference evidence="6 7 8" key="7">
    <citation type="journal article" date="2021" name="Nature">
        <title>Structure and assembly of the mammalian mitochondrial supercomplex CIII2CIV.</title>
        <authorList>
            <person name="Vercellino I."/>
            <person name="Sazanov L.A."/>
        </authorList>
    </citation>
    <scope>STRUCTURE BY ELECTRON MICROSCOPY (3.20 ANGSTROMS) IN COMPLEX WITH MITOCHONDRIAL RESPIRATORY SUPERCOMPLEX</scope>
    <scope>FUNCTION</scope>
    <scope>PATHWAY</scope>
    <scope>SUBCELLULAR LOCATION</scope>
    <scope>SUBUNIT</scope>
</reference>
<reference evidence="9" key="8">
    <citation type="journal article" date="2024" name="Nat. Struct. Mol. Biol.">
        <title>SCAF1 drives the compositional diversity of mammalian respirasomes.</title>
        <authorList>
            <person name="Vercellino I."/>
            <person name="Sazanov L.A."/>
        </authorList>
    </citation>
    <scope>STRUCTURE BY ELECTRON MICROSCOPY (3.60 ANGSTROMS) IN COMPLEX WITH MITOCHONDRIAL RESPIRATORY SUPERCOMPLEX</scope>
    <scope>FUNCTION</scope>
    <scope>PATHWAY</scope>
    <scope>SUBCELLULAR LOCATION</scope>
    <scope>SUBUNIT</scope>
</reference>
<feature type="transit peptide" description="Mitochondrion" evidence="1">
    <location>
        <begin position="1"/>
        <end position="12"/>
    </location>
</feature>
<feature type="chain" id="PRO_0000006117" description="Cytochrome c oxidase subunit 6A2, mitochondrial">
    <location>
        <begin position="13"/>
        <end position="97"/>
    </location>
</feature>
<feature type="topological domain" description="Mitochondrial matrix" evidence="3 7 8">
    <location>
        <begin position="13"/>
        <end position="25"/>
    </location>
</feature>
<feature type="transmembrane region" description="Helical" evidence="3 7 8">
    <location>
        <begin position="26"/>
        <end position="46"/>
    </location>
</feature>
<feature type="topological domain" description="Mitochondrial intermembrane" evidence="3 7 8">
    <location>
        <begin position="47"/>
        <end position="97"/>
    </location>
</feature>
<feature type="sequence conflict" description="In Ref. 1; AAA17835." evidence="5" ref="1">
    <original>G</original>
    <variation>S</variation>
    <location>
        <position position="39"/>
    </location>
</feature>
<feature type="helix" evidence="10">
    <location>
        <begin position="26"/>
        <end position="49"/>
    </location>
</feature>
<feature type="strand" evidence="10">
    <location>
        <begin position="63"/>
        <end position="66"/>
    </location>
</feature>
<feature type="strand" evidence="10">
    <location>
        <begin position="73"/>
        <end position="79"/>
    </location>
</feature>
<feature type="turn" evidence="10">
    <location>
        <begin position="85"/>
        <end position="87"/>
    </location>
</feature>
<organism>
    <name type="scientific">Mus musculus</name>
    <name type="common">Mouse</name>
    <dbReference type="NCBI Taxonomy" id="10090"/>
    <lineage>
        <taxon>Eukaryota</taxon>
        <taxon>Metazoa</taxon>
        <taxon>Chordata</taxon>
        <taxon>Craniata</taxon>
        <taxon>Vertebrata</taxon>
        <taxon>Euteleostomi</taxon>
        <taxon>Mammalia</taxon>
        <taxon>Eutheria</taxon>
        <taxon>Euarchontoglires</taxon>
        <taxon>Glires</taxon>
        <taxon>Rodentia</taxon>
        <taxon>Myomorpha</taxon>
        <taxon>Muroidea</taxon>
        <taxon>Muridae</taxon>
        <taxon>Murinae</taxon>
        <taxon>Mus</taxon>
        <taxon>Mus</taxon>
    </lineage>
</organism>
<evidence type="ECO:0000250" key="1">
    <source>
        <dbReference type="UniProtKB" id="P07471"/>
    </source>
</evidence>
<evidence type="ECO:0000269" key="2">
    <source>
    </source>
</evidence>
<evidence type="ECO:0000269" key="3">
    <source>
    </source>
</evidence>
<evidence type="ECO:0000269" key="4">
    <source>
    </source>
</evidence>
<evidence type="ECO:0000305" key="5"/>
<evidence type="ECO:0000312" key="6">
    <source>
        <dbReference type="PDB" id="7O3E"/>
    </source>
</evidence>
<evidence type="ECO:0007744" key="7">
    <source>
        <dbReference type="PDB" id="7O37"/>
    </source>
</evidence>
<evidence type="ECO:0007744" key="8">
    <source>
        <dbReference type="PDB" id="7O3C"/>
    </source>
</evidence>
<evidence type="ECO:0007744" key="9">
    <source>
        <dbReference type="PDB" id="8PW5"/>
    </source>
</evidence>
<evidence type="ECO:0007829" key="10">
    <source>
        <dbReference type="PDB" id="7O37"/>
    </source>
</evidence>
<name>CX6A2_MOUSE</name>